<name>CISY_STRHY</name>
<keyword id="KW-0021">Allosteric enzyme</keyword>
<keyword id="KW-0903">Direct protein sequencing</keyword>
<keyword id="KW-0808">Transferase</keyword>
<keyword id="KW-0816">Tricarboxylic acid cycle</keyword>
<protein>
    <recommendedName>
        <fullName>Citrate synthase</fullName>
        <ecNumber>2.3.3.16</ecNumber>
    </recommendedName>
</protein>
<comment type="catalytic activity">
    <reaction evidence="1">
        <text>oxaloacetate + acetyl-CoA + H2O = citrate + CoA + H(+)</text>
        <dbReference type="Rhea" id="RHEA:16845"/>
        <dbReference type="ChEBI" id="CHEBI:15377"/>
        <dbReference type="ChEBI" id="CHEBI:15378"/>
        <dbReference type="ChEBI" id="CHEBI:16452"/>
        <dbReference type="ChEBI" id="CHEBI:16947"/>
        <dbReference type="ChEBI" id="CHEBI:57287"/>
        <dbReference type="ChEBI" id="CHEBI:57288"/>
        <dbReference type="EC" id="2.3.3.16"/>
    </reaction>
</comment>
<comment type="activity regulation">
    <text>Allosterically inhibited by NADH.</text>
</comment>
<comment type="pathway">
    <text>Carbohydrate metabolism; tricarboxylic acid cycle; isocitrate from oxaloacetate: step 1/2.</text>
</comment>
<comment type="subunit">
    <text>Homohexamer.</text>
</comment>
<comment type="miscellaneous">
    <text>Citrate synthase is found in nearly all cells capable of oxidative metabolism.</text>
</comment>
<comment type="similarity">
    <text evidence="2">Belongs to the citrate synthase family.</text>
</comment>
<evidence type="ECO:0000255" key="1">
    <source>
        <dbReference type="PROSITE-ProRule" id="PRU10117"/>
    </source>
</evidence>
<evidence type="ECO:0000305" key="2"/>
<dbReference type="EC" id="2.3.3.16"/>
<dbReference type="PIR" id="PQ0046">
    <property type="entry name" value="PQ0046"/>
</dbReference>
<dbReference type="STRING" id="68042.GCA_001553435_06284"/>
<dbReference type="UniPathway" id="UPA00223">
    <property type="reaction ID" value="UER00717"/>
</dbReference>
<dbReference type="GO" id="GO:0036440">
    <property type="term" value="F:citrate synthase activity"/>
    <property type="evidence" value="ECO:0007669"/>
    <property type="project" value="UniProtKB-EC"/>
</dbReference>
<dbReference type="GO" id="GO:0006099">
    <property type="term" value="P:tricarboxylic acid cycle"/>
    <property type="evidence" value="ECO:0007669"/>
    <property type="project" value="UniProtKB-UniPathway"/>
</dbReference>
<gene>
    <name type="primary">gltA</name>
</gene>
<organism>
    <name type="scientific">Streptomyces hygroscopicus</name>
    <dbReference type="NCBI Taxonomy" id="1912"/>
    <lineage>
        <taxon>Bacteria</taxon>
        <taxon>Bacillati</taxon>
        <taxon>Actinomycetota</taxon>
        <taxon>Actinomycetes</taxon>
        <taxon>Kitasatosporales</taxon>
        <taxon>Streptomycetaceae</taxon>
        <taxon>Streptomyces</taxon>
        <taxon>Streptomyces violaceusniger group</taxon>
    </lineage>
</organism>
<sequence>SDNSVVLRYGDGEYSYPVVD</sequence>
<accession>P20903</accession>
<proteinExistence type="evidence at protein level"/>
<feature type="chain" id="PRO_0000169972" description="Citrate synthase">
    <location>
        <begin position="1"/>
        <end position="20" status="greater than"/>
    </location>
</feature>
<feature type="non-terminal residue">
    <location>
        <position position="20"/>
    </location>
</feature>
<reference key="1">
    <citation type="journal article" date="1990" name="Agric. Biol. Chem.">
        <title>Purification and characterization of citrate synthase from Streptomyces hygroscopicus SF-1293 and comparison of its properties with those of 2-phosphinomethylmalic acid synthase.</title>
        <authorList>
            <person name="Shimotohno K.W."/>
            <person name="Imai S."/>
            <person name="Murakami T."/>
            <person name="Seto H."/>
        </authorList>
    </citation>
    <scope>PROTEIN SEQUENCE</scope>
    <source>
        <strain>ATCC 21705 / DSM 41527 / SF-1293</strain>
    </source>
</reference>